<reference key="1">
    <citation type="submission" date="2008-10" db="EMBL/GenBank/DDBJ databases">
        <title>Genome sequence of Bacillus anthracis str. CDC 684.</title>
        <authorList>
            <person name="Dodson R.J."/>
            <person name="Munk A.C."/>
            <person name="Brettin T."/>
            <person name="Bruce D."/>
            <person name="Detter C."/>
            <person name="Tapia R."/>
            <person name="Han C."/>
            <person name="Sutton G."/>
            <person name="Sims D."/>
        </authorList>
    </citation>
    <scope>NUCLEOTIDE SEQUENCE [LARGE SCALE GENOMIC DNA]</scope>
    <source>
        <strain>CDC 684 / NRRL 3495</strain>
    </source>
</reference>
<organism>
    <name type="scientific">Bacillus anthracis (strain CDC 684 / NRRL 3495)</name>
    <dbReference type="NCBI Taxonomy" id="568206"/>
    <lineage>
        <taxon>Bacteria</taxon>
        <taxon>Bacillati</taxon>
        <taxon>Bacillota</taxon>
        <taxon>Bacilli</taxon>
        <taxon>Bacillales</taxon>
        <taxon>Bacillaceae</taxon>
        <taxon>Bacillus</taxon>
        <taxon>Bacillus cereus group</taxon>
    </lineage>
</organism>
<comment type="function">
    <text evidence="1">Reversibly transfers an adenylyl group from ATP to 4'-phosphopantetheine, yielding dephospho-CoA (dPCoA) and pyrophosphate.</text>
</comment>
<comment type="catalytic activity">
    <reaction evidence="1">
        <text>(R)-4'-phosphopantetheine + ATP + H(+) = 3'-dephospho-CoA + diphosphate</text>
        <dbReference type="Rhea" id="RHEA:19801"/>
        <dbReference type="ChEBI" id="CHEBI:15378"/>
        <dbReference type="ChEBI" id="CHEBI:30616"/>
        <dbReference type="ChEBI" id="CHEBI:33019"/>
        <dbReference type="ChEBI" id="CHEBI:57328"/>
        <dbReference type="ChEBI" id="CHEBI:61723"/>
        <dbReference type="EC" id="2.7.7.3"/>
    </reaction>
</comment>
<comment type="cofactor">
    <cofactor evidence="1">
        <name>Mg(2+)</name>
        <dbReference type="ChEBI" id="CHEBI:18420"/>
    </cofactor>
</comment>
<comment type="pathway">
    <text evidence="1">Cofactor biosynthesis; coenzyme A biosynthesis; CoA from (R)-pantothenate: step 4/5.</text>
</comment>
<comment type="subunit">
    <text evidence="1">Homohexamer.</text>
</comment>
<comment type="subcellular location">
    <subcellularLocation>
        <location evidence="1">Cytoplasm</location>
    </subcellularLocation>
</comment>
<comment type="similarity">
    <text evidence="1">Belongs to the bacterial CoaD family.</text>
</comment>
<name>COAD_BACAC</name>
<protein>
    <recommendedName>
        <fullName evidence="1">Phosphopantetheine adenylyltransferase</fullName>
        <ecNumber evidence="1">2.7.7.3</ecNumber>
    </recommendedName>
    <alternativeName>
        <fullName evidence="1">Dephospho-CoA pyrophosphorylase</fullName>
    </alternativeName>
    <alternativeName>
        <fullName evidence="1">Pantetheine-phosphate adenylyltransferase</fullName>
        <shortName evidence="1">PPAT</shortName>
    </alternativeName>
</protein>
<feature type="chain" id="PRO_1000123261" description="Phosphopantetheine adenylyltransferase">
    <location>
        <begin position="1"/>
        <end position="163"/>
    </location>
</feature>
<feature type="binding site" evidence="1">
    <location>
        <begin position="10"/>
        <end position="11"/>
    </location>
    <ligand>
        <name>ATP</name>
        <dbReference type="ChEBI" id="CHEBI:30616"/>
    </ligand>
</feature>
<feature type="binding site" evidence="1">
    <location>
        <position position="10"/>
    </location>
    <ligand>
        <name>substrate</name>
    </ligand>
</feature>
<feature type="binding site" evidence="1">
    <location>
        <position position="18"/>
    </location>
    <ligand>
        <name>ATP</name>
        <dbReference type="ChEBI" id="CHEBI:30616"/>
    </ligand>
</feature>
<feature type="binding site" evidence="1">
    <location>
        <position position="42"/>
    </location>
    <ligand>
        <name>substrate</name>
    </ligand>
</feature>
<feature type="binding site" evidence="1">
    <location>
        <position position="74"/>
    </location>
    <ligand>
        <name>substrate</name>
    </ligand>
</feature>
<feature type="binding site" evidence="1">
    <location>
        <position position="88"/>
    </location>
    <ligand>
        <name>substrate</name>
    </ligand>
</feature>
<feature type="binding site" evidence="1">
    <location>
        <begin position="89"/>
        <end position="91"/>
    </location>
    <ligand>
        <name>ATP</name>
        <dbReference type="ChEBI" id="CHEBI:30616"/>
    </ligand>
</feature>
<feature type="binding site" evidence="1">
    <location>
        <position position="99"/>
    </location>
    <ligand>
        <name>ATP</name>
        <dbReference type="ChEBI" id="CHEBI:30616"/>
    </ligand>
</feature>
<feature type="binding site" evidence="1">
    <location>
        <begin position="124"/>
        <end position="130"/>
    </location>
    <ligand>
        <name>ATP</name>
        <dbReference type="ChEBI" id="CHEBI:30616"/>
    </ligand>
</feature>
<feature type="site" description="Transition state stabilizer" evidence="1">
    <location>
        <position position="18"/>
    </location>
</feature>
<dbReference type="EC" id="2.7.7.3" evidence="1"/>
<dbReference type="EMBL" id="CP001215">
    <property type="protein sequence ID" value="ACP16467.1"/>
    <property type="molecule type" value="Genomic_DNA"/>
</dbReference>
<dbReference type="RefSeq" id="WP_000200598.1">
    <property type="nucleotide sequence ID" value="NC_012581.1"/>
</dbReference>
<dbReference type="SMR" id="C3LHZ4"/>
<dbReference type="GeneID" id="92799798"/>
<dbReference type="KEGG" id="bah:BAMEG_4179"/>
<dbReference type="HOGENOM" id="CLU_100149_0_1_9"/>
<dbReference type="UniPathway" id="UPA00241">
    <property type="reaction ID" value="UER00355"/>
</dbReference>
<dbReference type="GO" id="GO:0005737">
    <property type="term" value="C:cytoplasm"/>
    <property type="evidence" value="ECO:0007669"/>
    <property type="project" value="UniProtKB-SubCell"/>
</dbReference>
<dbReference type="GO" id="GO:0005524">
    <property type="term" value="F:ATP binding"/>
    <property type="evidence" value="ECO:0007669"/>
    <property type="project" value="UniProtKB-KW"/>
</dbReference>
<dbReference type="GO" id="GO:0004595">
    <property type="term" value="F:pantetheine-phosphate adenylyltransferase activity"/>
    <property type="evidence" value="ECO:0007669"/>
    <property type="project" value="UniProtKB-UniRule"/>
</dbReference>
<dbReference type="GO" id="GO:0015937">
    <property type="term" value="P:coenzyme A biosynthetic process"/>
    <property type="evidence" value="ECO:0007669"/>
    <property type="project" value="UniProtKB-UniRule"/>
</dbReference>
<dbReference type="CDD" id="cd02163">
    <property type="entry name" value="PPAT"/>
    <property type="match status" value="1"/>
</dbReference>
<dbReference type="FunFam" id="3.40.50.620:FF:000012">
    <property type="entry name" value="Phosphopantetheine adenylyltransferase"/>
    <property type="match status" value="1"/>
</dbReference>
<dbReference type="Gene3D" id="3.40.50.620">
    <property type="entry name" value="HUPs"/>
    <property type="match status" value="1"/>
</dbReference>
<dbReference type="HAMAP" id="MF_00151">
    <property type="entry name" value="PPAT_bact"/>
    <property type="match status" value="1"/>
</dbReference>
<dbReference type="InterPro" id="IPR004821">
    <property type="entry name" value="Cyt_trans-like"/>
</dbReference>
<dbReference type="InterPro" id="IPR001980">
    <property type="entry name" value="PPAT"/>
</dbReference>
<dbReference type="InterPro" id="IPR014729">
    <property type="entry name" value="Rossmann-like_a/b/a_fold"/>
</dbReference>
<dbReference type="NCBIfam" id="TIGR01510">
    <property type="entry name" value="coaD_prev_kdtB"/>
    <property type="match status" value="1"/>
</dbReference>
<dbReference type="NCBIfam" id="TIGR00125">
    <property type="entry name" value="cyt_tran_rel"/>
    <property type="match status" value="1"/>
</dbReference>
<dbReference type="PANTHER" id="PTHR21342">
    <property type="entry name" value="PHOSPHOPANTETHEINE ADENYLYLTRANSFERASE"/>
    <property type="match status" value="1"/>
</dbReference>
<dbReference type="PANTHER" id="PTHR21342:SF1">
    <property type="entry name" value="PHOSPHOPANTETHEINE ADENYLYLTRANSFERASE"/>
    <property type="match status" value="1"/>
</dbReference>
<dbReference type="Pfam" id="PF01467">
    <property type="entry name" value="CTP_transf_like"/>
    <property type="match status" value="1"/>
</dbReference>
<dbReference type="PRINTS" id="PR01020">
    <property type="entry name" value="LPSBIOSNTHSS"/>
</dbReference>
<dbReference type="SUPFAM" id="SSF52374">
    <property type="entry name" value="Nucleotidylyl transferase"/>
    <property type="match status" value="1"/>
</dbReference>
<keyword id="KW-0067">ATP-binding</keyword>
<keyword id="KW-0173">Coenzyme A biosynthesis</keyword>
<keyword id="KW-0963">Cytoplasm</keyword>
<keyword id="KW-0460">Magnesium</keyword>
<keyword id="KW-0547">Nucleotide-binding</keyword>
<keyword id="KW-0548">Nucleotidyltransferase</keyword>
<keyword id="KW-0808">Transferase</keyword>
<gene>
    <name evidence="1" type="primary">coaD</name>
    <name type="ordered locus">BAMEG_4179</name>
</gene>
<evidence type="ECO:0000255" key="1">
    <source>
        <dbReference type="HAMAP-Rule" id="MF_00151"/>
    </source>
</evidence>
<sequence>MTSIAISSGSFDPITLGHLDIIKRGAKVFDEVYVVVLNNSSKKPFFSVEERLDLIREATKDIPNVKVDSHSGLLVEYAKMRNANAILRGLRAVSDFEYEMQITSMNRKLDENIETFFIMTNNQYSFLSSSIVKEVARYGGSVVDLVPPVVERALKEKFQTPLK</sequence>
<accession>C3LHZ4</accession>
<proteinExistence type="inferred from homology"/>